<comment type="function">
    <text evidence="1">Catalyzes the synthesis of GMP from XMP.</text>
</comment>
<comment type="catalytic activity">
    <reaction evidence="1">
        <text>XMP + L-glutamine + ATP + H2O = GMP + L-glutamate + AMP + diphosphate + 2 H(+)</text>
        <dbReference type="Rhea" id="RHEA:11680"/>
        <dbReference type="ChEBI" id="CHEBI:15377"/>
        <dbReference type="ChEBI" id="CHEBI:15378"/>
        <dbReference type="ChEBI" id="CHEBI:29985"/>
        <dbReference type="ChEBI" id="CHEBI:30616"/>
        <dbReference type="ChEBI" id="CHEBI:33019"/>
        <dbReference type="ChEBI" id="CHEBI:57464"/>
        <dbReference type="ChEBI" id="CHEBI:58115"/>
        <dbReference type="ChEBI" id="CHEBI:58359"/>
        <dbReference type="ChEBI" id="CHEBI:456215"/>
        <dbReference type="EC" id="6.3.5.2"/>
    </reaction>
</comment>
<comment type="pathway">
    <text evidence="1">Purine metabolism; GMP biosynthesis; GMP from XMP (L-Gln route): step 1/1.</text>
</comment>
<comment type="subunit">
    <text evidence="1">Homodimer.</text>
</comment>
<accession>A7H2D2</accession>
<gene>
    <name evidence="1" type="primary">guaA</name>
    <name type="ordered locus">JJD26997_0477</name>
</gene>
<reference key="1">
    <citation type="submission" date="2007-07" db="EMBL/GenBank/DDBJ databases">
        <title>Complete genome sequence of Campylobacter jejuni subsp doylei 269.97 isolated from human blood.</title>
        <authorList>
            <person name="Fouts D.E."/>
            <person name="Mongodin E.F."/>
            <person name="Puiu D."/>
            <person name="Sebastian Y."/>
            <person name="Miller W.G."/>
            <person name="Mandrell R.E."/>
            <person name="Lastovica A.J."/>
            <person name="Nelson K.E."/>
        </authorList>
    </citation>
    <scope>NUCLEOTIDE SEQUENCE [LARGE SCALE GENOMIC DNA]</scope>
    <source>
        <strain>ATCC BAA-1458 / RM4099 / 269.97</strain>
    </source>
</reference>
<name>GUAA_CAMJD</name>
<proteinExistence type="inferred from homology"/>
<organism>
    <name type="scientific">Campylobacter jejuni subsp. doylei (strain ATCC BAA-1458 / RM4099 / 269.97)</name>
    <dbReference type="NCBI Taxonomy" id="360109"/>
    <lineage>
        <taxon>Bacteria</taxon>
        <taxon>Pseudomonadati</taxon>
        <taxon>Campylobacterota</taxon>
        <taxon>Epsilonproteobacteria</taxon>
        <taxon>Campylobacterales</taxon>
        <taxon>Campylobacteraceae</taxon>
        <taxon>Campylobacter</taxon>
    </lineage>
</organism>
<protein>
    <recommendedName>
        <fullName evidence="1">GMP synthase [glutamine-hydrolyzing]</fullName>
        <ecNumber evidence="1">6.3.5.2</ecNumber>
    </recommendedName>
    <alternativeName>
        <fullName evidence="1">GMP synthetase</fullName>
    </alternativeName>
    <alternativeName>
        <fullName evidence="1">Glutamine amidotransferase</fullName>
    </alternativeName>
</protein>
<feature type="chain" id="PRO_1000120248" description="GMP synthase [glutamine-hydrolyzing]">
    <location>
        <begin position="1"/>
        <end position="511"/>
    </location>
</feature>
<feature type="domain" description="Glutamine amidotransferase type-1" evidence="1">
    <location>
        <begin position="5"/>
        <end position="195"/>
    </location>
</feature>
<feature type="domain" description="GMPS ATP-PPase" evidence="1">
    <location>
        <begin position="196"/>
        <end position="386"/>
    </location>
</feature>
<feature type="active site" description="Nucleophile" evidence="1">
    <location>
        <position position="82"/>
    </location>
</feature>
<feature type="active site" evidence="1">
    <location>
        <position position="169"/>
    </location>
</feature>
<feature type="active site" evidence="1">
    <location>
        <position position="171"/>
    </location>
</feature>
<feature type="binding site" evidence="1">
    <location>
        <begin position="223"/>
        <end position="229"/>
    </location>
    <ligand>
        <name>ATP</name>
        <dbReference type="ChEBI" id="CHEBI:30616"/>
    </ligand>
</feature>
<keyword id="KW-0067">ATP-binding</keyword>
<keyword id="KW-0315">Glutamine amidotransferase</keyword>
<keyword id="KW-0332">GMP biosynthesis</keyword>
<keyword id="KW-0436">Ligase</keyword>
<keyword id="KW-0547">Nucleotide-binding</keyword>
<keyword id="KW-0658">Purine biosynthesis</keyword>
<sequence length="511" mass="56876">MKKADILVLDFGSQYTQLIARRLREQGVYAEILPFNVSLADIKAKEPKGIILSGGPASVYATDAYFCDKGIFDLGLPVLGICYGMQLMAHHYKATVAPAGHKEYGKANIEVKKDSALFKNLPKKQTVWMSHSDKVENLSQGFEVLATSENSPFCVFGNEDKKFFALQFHPEVQHSEFGKNILKNFAKYACNCESVWNMGSFAKTQAEKIREEVGNDKVLCAVSGGVDSSVVAALLASAIKEQVIVVFVDNGLLRSGEKEQVEFMFKNTLGIDLISIDASEIFLSRLANVRDPEQKRKIIGNTFIEIFEEEAKKHKDVKYLAQGTLYTDIIESSVVGASKTIKSHHNVGGLPEKINLKLIEPLKEIFKDEVRALGLELGLSKEVVYRHPFPGPGLAIRIMGEVNRPSLELLRKADVILLEELKSTGWYDKTWQAFCVLLNVKSVGVMGDNRTYDNAVCIRVVDASDGMTATFSHLPYEVLENISRRIINEVEGINRVVYDISSKPPATIEWE</sequence>
<evidence type="ECO:0000255" key="1">
    <source>
        <dbReference type="HAMAP-Rule" id="MF_00344"/>
    </source>
</evidence>
<dbReference type="EC" id="6.3.5.2" evidence="1"/>
<dbReference type="EMBL" id="CP000768">
    <property type="protein sequence ID" value="ABS44516.1"/>
    <property type="molecule type" value="Genomic_DNA"/>
</dbReference>
<dbReference type="SMR" id="A7H2D2"/>
<dbReference type="MEROPS" id="C26.957"/>
<dbReference type="KEGG" id="cjd:JJD26997_0477"/>
<dbReference type="HOGENOM" id="CLU_014340_0_5_7"/>
<dbReference type="UniPathway" id="UPA00189">
    <property type="reaction ID" value="UER00296"/>
</dbReference>
<dbReference type="Proteomes" id="UP000002302">
    <property type="component" value="Chromosome"/>
</dbReference>
<dbReference type="GO" id="GO:0005829">
    <property type="term" value="C:cytosol"/>
    <property type="evidence" value="ECO:0007669"/>
    <property type="project" value="TreeGrafter"/>
</dbReference>
<dbReference type="GO" id="GO:0005524">
    <property type="term" value="F:ATP binding"/>
    <property type="evidence" value="ECO:0007669"/>
    <property type="project" value="UniProtKB-UniRule"/>
</dbReference>
<dbReference type="GO" id="GO:0003921">
    <property type="term" value="F:GMP synthase activity"/>
    <property type="evidence" value="ECO:0007669"/>
    <property type="project" value="InterPro"/>
</dbReference>
<dbReference type="CDD" id="cd01742">
    <property type="entry name" value="GATase1_GMP_Synthase"/>
    <property type="match status" value="1"/>
</dbReference>
<dbReference type="CDD" id="cd01997">
    <property type="entry name" value="GMP_synthase_C"/>
    <property type="match status" value="1"/>
</dbReference>
<dbReference type="FunFam" id="3.30.300.10:FF:000002">
    <property type="entry name" value="GMP synthase [glutamine-hydrolyzing]"/>
    <property type="match status" value="1"/>
</dbReference>
<dbReference type="FunFam" id="3.40.50.620:FF:000001">
    <property type="entry name" value="GMP synthase [glutamine-hydrolyzing]"/>
    <property type="match status" value="1"/>
</dbReference>
<dbReference type="FunFam" id="3.40.50.880:FF:000001">
    <property type="entry name" value="GMP synthase [glutamine-hydrolyzing]"/>
    <property type="match status" value="1"/>
</dbReference>
<dbReference type="Gene3D" id="3.30.300.10">
    <property type="match status" value="1"/>
</dbReference>
<dbReference type="Gene3D" id="3.40.50.880">
    <property type="match status" value="1"/>
</dbReference>
<dbReference type="Gene3D" id="3.40.50.620">
    <property type="entry name" value="HUPs"/>
    <property type="match status" value="1"/>
</dbReference>
<dbReference type="HAMAP" id="MF_00344">
    <property type="entry name" value="GMP_synthase"/>
    <property type="match status" value="1"/>
</dbReference>
<dbReference type="InterPro" id="IPR029062">
    <property type="entry name" value="Class_I_gatase-like"/>
</dbReference>
<dbReference type="InterPro" id="IPR017926">
    <property type="entry name" value="GATASE"/>
</dbReference>
<dbReference type="InterPro" id="IPR001674">
    <property type="entry name" value="GMP_synth_C"/>
</dbReference>
<dbReference type="InterPro" id="IPR004739">
    <property type="entry name" value="GMP_synth_GATase"/>
</dbReference>
<dbReference type="InterPro" id="IPR022955">
    <property type="entry name" value="GMP_synthase"/>
</dbReference>
<dbReference type="InterPro" id="IPR025777">
    <property type="entry name" value="GMPS_ATP_PPase_dom"/>
</dbReference>
<dbReference type="InterPro" id="IPR022310">
    <property type="entry name" value="NAD/GMP_synthase"/>
</dbReference>
<dbReference type="InterPro" id="IPR014729">
    <property type="entry name" value="Rossmann-like_a/b/a_fold"/>
</dbReference>
<dbReference type="NCBIfam" id="TIGR00884">
    <property type="entry name" value="guaA_Cterm"/>
    <property type="match status" value="1"/>
</dbReference>
<dbReference type="NCBIfam" id="TIGR00888">
    <property type="entry name" value="guaA_Nterm"/>
    <property type="match status" value="1"/>
</dbReference>
<dbReference type="NCBIfam" id="NF000848">
    <property type="entry name" value="PRK00074.1"/>
    <property type="match status" value="1"/>
</dbReference>
<dbReference type="PANTHER" id="PTHR11922:SF2">
    <property type="entry name" value="GMP SYNTHASE [GLUTAMINE-HYDROLYZING]"/>
    <property type="match status" value="1"/>
</dbReference>
<dbReference type="PANTHER" id="PTHR11922">
    <property type="entry name" value="GMP SYNTHASE-RELATED"/>
    <property type="match status" value="1"/>
</dbReference>
<dbReference type="Pfam" id="PF00117">
    <property type="entry name" value="GATase"/>
    <property type="match status" value="1"/>
</dbReference>
<dbReference type="Pfam" id="PF00958">
    <property type="entry name" value="GMP_synt_C"/>
    <property type="match status" value="1"/>
</dbReference>
<dbReference type="Pfam" id="PF02540">
    <property type="entry name" value="NAD_synthase"/>
    <property type="match status" value="1"/>
</dbReference>
<dbReference type="PRINTS" id="PR00097">
    <property type="entry name" value="ANTSNTHASEII"/>
</dbReference>
<dbReference type="PRINTS" id="PR00096">
    <property type="entry name" value="GATASE"/>
</dbReference>
<dbReference type="SUPFAM" id="SSF52402">
    <property type="entry name" value="Adenine nucleotide alpha hydrolases-like"/>
    <property type="match status" value="1"/>
</dbReference>
<dbReference type="SUPFAM" id="SSF52317">
    <property type="entry name" value="Class I glutamine amidotransferase-like"/>
    <property type="match status" value="1"/>
</dbReference>
<dbReference type="SUPFAM" id="SSF54810">
    <property type="entry name" value="GMP synthetase C-terminal dimerisation domain"/>
    <property type="match status" value="1"/>
</dbReference>
<dbReference type="PROSITE" id="PS51273">
    <property type="entry name" value="GATASE_TYPE_1"/>
    <property type="match status" value="1"/>
</dbReference>
<dbReference type="PROSITE" id="PS51553">
    <property type="entry name" value="GMPS_ATP_PPASE"/>
    <property type="match status" value="1"/>
</dbReference>